<feature type="chain" id="PRO_0000061390" description="Cytochrome b">
    <location>
        <begin position="1"/>
        <end position="379"/>
    </location>
</feature>
<feature type="transmembrane region" description="Helical" evidence="2">
    <location>
        <begin position="33"/>
        <end position="53"/>
    </location>
</feature>
<feature type="transmembrane region" description="Helical" evidence="2">
    <location>
        <begin position="77"/>
        <end position="98"/>
    </location>
</feature>
<feature type="transmembrane region" description="Helical" evidence="2">
    <location>
        <begin position="113"/>
        <end position="133"/>
    </location>
</feature>
<feature type="transmembrane region" description="Helical" evidence="2">
    <location>
        <begin position="178"/>
        <end position="198"/>
    </location>
</feature>
<feature type="transmembrane region" description="Helical" evidence="2">
    <location>
        <begin position="226"/>
        <end position="246"/>
    </location>
</feature>
<feature type="transmembrane region" description="Helical" evidence="2">
    <location>
        <begin position="288"/>
        <end position="308"/>
    </location>
</feature>
<feature type="transmembrane region" description="Helical" evidence="2">
    <location>
        <begin position="320"/>
        <end position="340"/>
    </location>
</feature>
<feature type="transmembrane region" description="Helical" evidence="2">
    <location>
        <begin position="347"/>
        <end position="367"/>
    </location>
</feature>
<feature type="binding site" description="axial binding residue" evidence="2">
    <location>
        <position position="83"/>
    </location>
    <ligand>
        <name>heme b</name>
        <dbReference type="ChEBI" id="CHEBI:60344"/>
        <label>b562</label>
    </ligand>
    <ligandPart>
        <name>Fe</name>
        <dbReference type="ChEBI" id="CHEBI:18248"/>
    </ligandPart>
</feature>
<feature type="binding site" description="axial binding residue" evidence="2">
    <location>
        <position position="97"/>
    </location>
    <ligand>
        <name>heme b</name>
        <dbReference type="ChEBI" id="CHEBI:60344"/>
        <label>b566</label>
    </ligand>
    <ligandPart>
        <name>Fe</name>
        <dbReference type="ChEBI" id="CHEBI:18248"/>
    </ligandPart>
</feature>
<feature type="binding site" description="axial binding residue" evidence="2">
    <location>
        <position position="182"/>
    </location>
    <ligand>
        <name>heme b</name>
        <dbReference type="ChEBI" id="CHEBI:60344"/>
        <label>b562</label>
    </ligand>
    <ligandPart>
        <name>Fe</name>
        <dbReference type="ChEBI" id="CHEBI:18248"/>
    </ligandPart>
</feature>
<feature type="binding site" description="axial binding residue" evidence="2">
    <location>
        <position position="196"/>
    </location>
    <ligand>
        <name>heme b</name>
        <dbReference type="ChEBI" id="CHEBI:60344"/>
        <label>b566</label>
    </ligand>
    <ligandPart>
        <name>Fe</name>
        <dbReference type="ChEBI" id="CHEBI:18248"/>
    </ligandPart>
</feature>
<feature type="binding site" evidence="2">
    <location>
        <position position="201"/>
    </location>
    <ligand>
        <name>a ubiquinone</name>
        <dbReference type="ChEBI" id="CHEBI:16389"/>
    </ligand>
</feature>
<geneLocation type="mitochondrion"/>
<sequence>MTNIRKTHPLMKIINNSFIDLPTPSNISAWWNFGSLLGICLILHILTGLFLAMHYTSDTTTAFSSVTHICRDVNYGWIIRYLHANGASMFFICLYMHVGRGLYYGSYTFTETWNIGIILLFTVMATAFMGYVLPWGQMSFWGATVITNLLSAIPYIGTDLVQWIWGGFSVDKATLTRFFAFHFILPFVVLALAAVHLLFLHETGSNNPSGIMSDSDKIPFHPYYTIKDILGALLLILVLTLLVLFSPDLLGDPDNYIPANPLNTPPHIKPEWYFLFAYAILRSIPNKLGGVLALVLSILILAIVPLLHTSKQRGMMFRPISQCLFWLLVADLLTLTWIGGQPVEHPYITIGQLASILYFTILLVLMPIASIVENNILKW</sequence>
<proteinExistence type="inferred from homology"/>
<name>CYB_PHOLR</name>
<evidence type="ECO:0000250" key="1"/>
<evidence type="ECO:0000250" key="2">
    <source>
        <dbReference type="UniProtKB" id="P00157"/>
    </source>
</evidence>
<evidence type="ECO:0000255" key="3">
    <source>
        <dbReference type="PROSITE-ProRule" id="PRU00967"/>
    </source>
</evidence>
<evidence type="ECO:0000255" key="4">
    <source>
        <dbReference type="PROSITE-ProRule" id="PRU00968"/>
    </source>
</evidence>
<protein>
    <recommendedName>
        <fullName>Cytochrome b</fullName>
    </recommendedName>
    <alternativeName>
        <fullName>Complex III subunit 3</fullName>
    </alternativeName>
    <alternativeName>
        <fullName>Complex III subunit III</fullName>
    </alternativeName>
    <alternativeName>
        <fullName>Cytochrome b-c1 complex subunit 3</fullName>
    </alternativeName>
    <alternativeName>
        <fullName>Ubiquinol-cytochrome-c reductase complex cytochrome b subunit</fullName>
    </alternativeName>
</protein>
<gene>
    <name type="primary">MT-CYB</name>
    <name type="synonym">COB</name>
    <name type="synonym">CYTB</name>
    <name type="synonym">MTCYB</name>
</gene>
<accession>Q35505</accession>
<organism>
    <name type="scientific">Phoca largha</name>
    <name type="common">Spotted seal</name>
    <dbReference type="NCBI Taxonomy" id="39090"/>
    <lineage>
        <taxon>Eukaryota</taxon>
        <taxon>Metazoa</taxon>
        <taxon>Chordata</taxon>
        <taxon>Craniata</taxon>
        <taxon>Vertebrata</taxon>
        <taxon>Euteleostomi</taxon>
        <taxon>Mammalia</taxon>
        <taxon>Eutheria</taxon>
        <taxon>Laurasiatheria</taxon>
        <taxon>Carnivora</taxon>
        <taxon>Caniformia</taxon>
        <taxon>Pinnipedia</taxon>
        <taxon>Phocidae</taxon>
        <taxon>Phocinae</taxon>
        <taxon>Phoca</taxon>
    </lineage>
</organism>
<keyword id="KW-0249">Electron transport</keyword>
<keyword id="KW-0349">Heme</keyword>
<keyword id="KW-0408">Iron</keyword>
<keyword id="KW-0472">Membrane</keyword>
<keyword id="KW-0479">Metal-binding</keyword>
<keyword id="KW-0496">Mitochondrion</keyword>
<keyword id="KW-0999">Mitochondrion inner membrane</keyword>
<keyword id="KW-0679">Respiratory chain</keyword>
<keyword id="KW-0812">Transmembrane</keyword>
<keyword id="KW-1133">Transmembrane helix</keyword>
<keyword id="KW-0813">Transport</keyword>
<keyword id="KW-0830">Ubiquinone</keyword>
<dbReference type="EMBL" id="X82305">
    <property type="protein sequence ID" value="CAA57748.1"/>
    <property type="molecule type" value="Genomic_DNA"/>
</dbReference>
<dbReference type="PIR" id="S58450">
    <property type="entry name" value="S58450"/>
</dbReference>
<dbReference type="SMR" id="Q35505"/>
<dbReference type="GO" id="GO:0005743">
    <property type="term" value="C:mitochondrial inner membrane"/>
    <property type="evidence" value="ECO:0007669"/>
    <property type="project" value="UniProtKB-SubCell"/>
</dbReference>
<dbReference type="GO" id="GO:0045275">
    <property type="term" value="C:respiratory chain complex III"/>
    <property type="evidence" value="ECO:0007669"/>
    <property type="project" value="InterPro"/>
</dbReference>
<dbReference type="GO" id="GO:0046872">
    <property type="term" value="F:metal ion binding"/>
    <property type="evidence" value="ECO:0007669"/>
    <property type="project" value="UniProtKB-KW"/>
</dbReference>
<dbReference type="GO" id="GO:0008121">
    <property type="term" value="F:ubiquinol-cytochrome-c reductase activity"/>
    <property type="evidence" value="ECO:0007669"/>
    <property type="project" value="InterPro"/>
</dbReference>
<dbReference type="GO" id="GO:0006122">
    <property type="term" value="P:mitochondrial electron transport, ubiquinol to cytochrome c"/>
    <property type="evidence" value="ECO:0007669"/>
    <property type="project" value="TreeGrafter"/>
</dbReference>
<dbReference type="CDD" id="cd00290">
    <property type="entry name" value="cytochrome_b_C"/>
    <property type="match status" value="1"/>
</dbReference>
<dbReference type="CDD" id="cd00284">
    <property type="entry name" value="Cytochrome_b_N"/>
    <property type="match status" value="1"/>
</dbReference>
<dbReference type="FunFam" id="1.20.810.10:FF:000002">
    <property type="entry name" value="Cytochrome b"/>
    <property type="match status" value="1"/>
</dbReference>
<dbReference type="Gene3D" id="1.20.810.10">
    <property type="entry name" value="Cytochrome Bc1 Complex, Chain C"/>
    <property type="match status" value="1"/>
</dbReference>
<dbReference type="InterPro" id="IPR005798">
    <property type="entry name" value="Cyt_b/b6_C"/>
</dbReference>
<dbReference type="InterPro" id="IPR036150">
    <property type="entry name" value="Cyt_b/b6_C_sf"/>
</dbReference>
<dbReference type="InterPro" id="IPR005797">
    <property type="entry name" value="Cyt_b/b6_N"/>
</dbReference>
<dbReference type="InterPro" id="IPR027387">
    <property type="entry name" value="Cytb/b6-like_sf"/>
</dbReference>
<dbReference type="InterPro" id="IPR030689">
    <property type="entry name" value="Cytochrome_b"/>
</dbReference>
<dbReference type="InterPro" id="IPR048260">
    <property type="entry name" value="Cytochrome_b_C_euk/bac"/>
</dbReference>
<dbReference type="InterPro" id="IPR048259">
    <property type="entry name" value="Cytochrome_b_N_euk/bac"/>
</dbReference>
<dbReference type="InterPro" id="IPR016174">
    <property type="entry name" value="Di-haem_cyt_TM"/>
</dbReference>
<dbReference type="PANTHER" id="PTHR19271">
    <property type="entry name" value="CYTOCHROME B"/>
    <property type="match status" value="1"/>
</dbReference>
<dbReference type="PANTHER" id="PTHR19271:SF16">
    <property type="entry name" value="CYTOCHROME B"/>
    <property type="match status" value="1"/>
</dbReference>
<dbReference type="Pfam" id="PF00032">
    <property type="entry name" value="Cytochrom_B_C"/>
    <property type="match status" value="1"/>
</dbReference>
<dbReference type="Pfam" id="PF00033">
    <property type="entry name" value="Cytochrome_B"/>
    <property type="match status" value="1"/>
</dbReference>
<dbReference type="PIRSF" id="PIRSF038885">
    <property type="entry name" value="COB"/>
    <property type="match status" value="1"/>
</dbReference>
<dbReference type="SUPFAM" id="SSF81648">
    <property type="entry name" value="a domain/subunit of cytochrome bc1 complex (Ubiquinol-cytochrome c reductase)"/>
    <property type="match status" value="1"/>
</dbReference>
<dbReference type="SUPFAM" id="SSF81342">
    <property type="entry name" value="Transmembrane di-heme cytochromes"/>
    <property type="match status" value="1"/>
</dbReference>
<dbReference type="PROSITE" id="PS51003">
    <property type="entry name" value="CYTB_CTER"/>
    <property type="match status" value="1"/>
</dbReference>
<dbReference type="PROSITE" id="PS51002">
    <property type="entry name" value="CYTB_NTER"/>
    <property type="match status" value="1"/>
</dbReference>
<reference key="1">
    <citation type="journal article" date="1995" name="J. Mol. Evol.">
        <title>A molecular view of pinniped relationships with particular emphasis on the true seals.</title>
        <authorList>
            <person name="Arnason U."/>
            <person name="Bodin K."/>
            <person name="Gullberg A."/>
            <person name="Ledje C."/>
            <person name="Mouchaty S."/>
        </authorList>
    </citation>
    <scope>NUCLEOTIDE SEQUENCE [GENOMIC DNA]</scope>
</reference>
<comment type="function">
    <text evidence="2">Component of the ubiquinol-cytochrome c reductase complex (complex III or cytochrome b-c1 complex) that is part of the mitochondrial respiratory chain. The b-c1 complex mediates electron transfer from ubiquinol to cytochrome c. Contributes to the generation of a proton gradient across the mitochondrial membrane that is then used for ATP synthesis.</text>
</comment>
<comment type="cofactor">
    <cofactor evidence="2">
        <name>heme b</name>
        <dbReference type="ChEBI" id="CHEBI:60344"/>
    </cofactor>
    <text evidence="2">Binds 2 heme b groups non-covalently.</text>
</comment>
<comment type="subunit">
    <text evidence="2">The cytochrome bc1 complex contains 11 subunits: 3 respiratory subunits (MT-CYB, CYC1 and UQCRFS1), 2 core proteins (UQCRC1 and UQCRC2) and 6 low-molecular weight proteins (UQCRH/QCR6, UQCRB/QCR7, UQCRQ/QCR8, UQCR10/QCR9, UQCR11/QCR10 and a cleavage product of UQCRFS1). This cytochrome bc1 complex then forms a dimer.</text>
</comment>
<comment type="subcellular location">
    <subcellularLocation>
        <location evidence="2">Mitochondrion inner membrane</location>
        <topology evidence="2">Multi-pass membrane protein</topology>
    </subcellularLocation>
</comment>
<comment type="miscellaneous">
    <text evidence="1">Heme 1 (or BL or b562) is low-potential and absorbs at about 562 nm, and heme 2 (or BH or b566) is high-potential and absorbs at about 566 nm.</text>
</comment>
<comment type="similarity">
    <text evidence="3 4">Belongs to the cytochrome b family.</text>
</comment>
<comment type="caution">
    <text evidence="2">The full-length protein contains only eight transmembrane helices, not nine as predicted by bioinformatics tools.</text>
</comment>